<organism>
    <name type="scientific">Oenococcus oeni (strain ATCC BAA-331 / PSU-1)</name>
    <dbReference type="NCBI Taxonomy" id="203123"/>
    <lineage>
        <taxon>Bacteria</taxon>
        <taxon>Bacillati</taxon>
        <taxon>Bacillota</taxon>
        <taxon>Bacilli</taxon>
        <taxon>Lactobacillales</taxon>
        <taxon>Lactobacillaceae</taxon>
        <taxon>Oenococcus</taxon>
    </lineage>
</organism>
<protein>
    <recommendedName>
        <fullName>Lysine racemase</fullName>
        <ecNumber>5.1.1.5</ecNumber>
    </recommendedName>
</protein>
<name>LYSR_OENOB</name>
<accession>Q04HB7</accession>
<evidence type="ECO:0000250" key="1"/>
<evidence type="ECO:0000269" key="2">
    <source>
    </source>
</evidence>
<evidence type="ECO:0000269" key="3">
    <source>
    </source>
</evidence>
<evidence type="ECO:0000305" key="4"/>
<evidence type="ECO:0007829" key="5">
    <source>
        <dbReference type="PDB" id="3CO8"/>
    </source>
</evidence>
<sequence>MVEAIHRSTRIEFSKSSLAYNVQYTKQVSGAKTLWLAVKSNAYGHGLLQVSKIARECGVDGLAVSVLDEGIAIRQAGIDDFILILGPIDVKYAPIASKYHFLTTVSSLDWLKSADKILGKEKLSVNLAVDTGMNRIGVRSKKDLKDEIEFLQEHSDHFSYDGIFTHFASSDNPDDHYFQRQKNRWYELIDGLIMPRYVHVMNSGAAMYHSKELPGCNSIARVGTVVYGVEPSEGVLGPIDKLKPVFELKSALTFVKKIPAGEGISYGSKFVTSRDTWIGTLPIGYGDGWLAEYQDFQLLIDGQKCRQVGQIAMDQMMVALPHEYPIGTEVTLIGKSGKYENTLYDLHKHSGVPPWKITVAFSDRLKRMVVD</sequence>
<comment type="function">
    <text evidence="2">Catalyzes the interconversion of D-lysine and L-lysine. Can also use arginine and ornithine, but not alanine.</text>
</comment>
<comment type="catalytic activity">
    <reaction evidence="2">
        <text>L-lysine = D-lysine</text>
        <dbReference type="Rhea" id="RHEA:22864"/>
        <dbReference type="ChEBI" id="CHEBI:32551"/>
        <dbReference type="ChEBI" id="CHEBI:32557"/>
        <dbReference type="EC" id="5.1.1.5"/>
    </reaction>
</comment>
<comment type="cofactor">
    <cofactor evidence="2 3">
        <name>pyridoxal 5'-phosphate</name>
        <dbReference type="ChEBI" id="CHEBI:597326"/>
    </cofactor>
</comment>
<comment type="biophysicochemical properties">
    <kinetics>
        <KM evidence="2">11 mM for L-lysine</KM>
        <KM evidence="2">9.8 mM for D-lysine</KM>
        <KM evidence="2">27 mM for L-ornithine</KM>
        <KM evidence="2">22 mM for D-ornithine</KM>
        <text>kcat is 2.1 min(-1) for L-lysine. kcat is 1.7 min(-1) for D-lysine. kcat is 1.1 min(-1) for L-ornithine. kcat is 1.1 min(-1) for D-ornithine.</text>
    </kinetics>
    <phDependence>
        <text evidence="2">Optimum pH is 9.0.</text>
    </phDependence>
</comment>
<comment type="subunit">
    <text evidence="3">Homodimer.</text>
</comment>
<comment type="similarity">
    <text evidence="4">Belongs to the alanine racemase family.</text>
</comment>
<dbReference type="EC" id="5.1.1.5"/>
<dbReference type="EMBL" id="CP000411">
    <property type="protein sequence ID" value="ABJ56155.1"/>
    <property type="molecule type" value="Genomic_DNA"/>
</dbReference>
<dbReference type="PDB" id="3CO8">
    <property type="method" value="X-ray"/>
    <property type="resolution" value="1.70 A"/>
    <property type="chains" value="A/B=3-371"/>
</dbReference>
<dbReference type="PDBsum" id="3CO8"/>
<dbReference type="SMR" id="Q04HB7"/>
<dbReference type="STRING" id="203123.OEOE_0162"/>
<dbReference type="DNASU" id="4416729"/>
<dbReference type="KEGG" id="ooe:OEOE_0162"/>
<dbReference type="eggNOG" id="COG0787">
    <property type="taxonomic scope" value="Bacteria"/>
</dbReference>
<dbReference type="HOGENOM" id="CLU_028393_2_1_9"/>
<dbReference type="BRENDA" id="5.1.1.5">
    <property type="organism ID" value="3009"/>
</dbReference>
<dbReference type="EvolutionaryTrace" id="Q04HB7"/>
<dbReference type="Proteomes" id="UP000000774">
    <property type="component" value="Chromosome"/>
</dbReference>
<dbReference type="GO" id="GO:0005829">
    <property type="term" value="C:cytosol"/>
    <property type="evidence" value="ECO:0007669"/>
    <property type="project" value="TreeGrafter"/>
</dbReference>
<dbReference type="GO" id="GO:0008784">
    <property type="term" value="F:alanine racemase activity"/>
    <property type="evidence" value="ECO:0007669"/>
    <property type="project" value="UniProtKB-UniRule"/>
</dbReference>
<dbReference type="GO" id="GO:0018113">
    <property type="term" value="F:lysine racemase activity"/>
    <property type="evidence" value="ECO:0007669"/>
    <property type="project" value="UniProtKB-EC"/>
</dbReference>
<dbReference type="GO" id="GO:0030170">
    <property type="term" value="F:pyridoxal phosphate binding"/>
    <property type="evidence" value="ECO:0007669"/>
    <property type="project" value="UniProtKB-UniRule"/>
</dbReference>
<dbReference type="GO" id="GO:0030632">
    <property type="term" value="P:D-alanine biosynthetic process"/>
    <property type="evidence" value="ECO:0007669"/>
    <property type="project" value="UniProtKB-UniRule"/>
</dbReference>
<dbReference type="GO" id="GO:0009252">
    <property type="term" value="P:peptidoglycan biosynthetic process"/>
    <property type="evidence" value="ECO:0007669"/>
    <property type="project" value="TreeGrafter"/>
</dbReference>
<dbReference type="CDD" id="cd00430">
    <property type="entry name" value="PLPDE_III_AR"/>
    <property type="match status" value="1"/>
</dbReference>
<dbReference type="FunFam" id="3.20.20.10:FF:000002">
    <property type="entry name" value="Alanine racemase"/>
    <property type="match status" value="1"/>
</dbReference>
<dbReference type="Gene3D" id="3.20.20.10">
    <property type="entry name" value="Alanine racemase"/>
    <property type="match status" value="1"/>
</dbReference>
<dbReference type="Gene3D" id="2.40.37.10">
    <property type="entry name" value="Lyase, Ornithine Decarboxylase, Chain A, domain 1"/>
    <property type="match status" value="1"/>
</dbReference>
<dbReference type="HAMAP" id="MF_01201">
    <property type="entry name" value="Ala_racemase"/>
    <property type="match status" value="1"/>
</dbReference>
<dbReference type="InterPro" id="IPR000821">
    <property type="entry name" value="Ala_racemase"/>
</dbReference>
<dbReference type="InterPro" id="IPR009006">
    <property type="entry name" value="Ala_racemase/Decarboxylase_C"/>
</dbReference>
<dbReference type="InterPro" id="IPR011079">
    <property type="entry name" value="Ala_racemase_C"/>
</dbReference>
<dbReference type="InterPro" id="IPR001608">
    <property type="entry name" value="Ala_racemase_N"/>
</dbReference>
<dbReference type="InterPro" id="IPR020622">
    <property type="entry name" value="Ala_racemase_pyridoxalP-BS"/>
</dbReference>
<dbReference type="InterPro" id="IPR029066">
    <property type="entry name" value="PLP-binding_barrel"/>
</dbReference>
<dbReference type="NCBIfam" id="TIGR00492">
    <property type="entry name" value="alr"/>
    <property type="match status" value="1"/>
</dbReference>
<dbReference type="PANTHER" id="PTHR30511">
    <property type="entry name" value="ALANINE RACEMASE"/>
    <property type="match status" value="1"/>
</dbReference>
<dbReference type="PANTHER" id="PTHR30511:SF0">
    <property type="entry name" value="ALANINE RACEMASE, CATABOLIC-RELATED"/>
    <property type="match status" value="1"/>
</dbReference>
<dbReference type="Pfam" id="PF00842">
    <property type="entry name" value="Ala_racemase_C"/>
    <property type="match status" value="1"/>
</dbReference>
<dbReference type="Pfam" id="PF01168">
    <property type="entry name" value="Ala_racemase_N"/>
    <property type="match status" value="1"/>
</dbReference>
<dbReference type="PRINTS" id="PR00992">
    <property type="entry name" value="ALARACEMASE"/>
</dbReference>
<dbReference type="SMART" id="SM01005">
    <property type="entry name" value="Ala_racemase_C"/>
    <property type="match status" value="1"/>
</dbReference>
<dbReference type="SUPFAM" id="SSF50621">
    <property type="entry name" value="Alanine racemase C-terminal domain-like"/>
    <property type="match status" value="1"/>
</dbReference>
<dbReference type="SUPFAM" id="SSF51419">
    <property type="entry name" value="PLP-binding barrel"/>
    <property type="match status" value="1"/>
</dbReference>
<dbReference type="PROSITE" id="PS00395">
    <property type="entry name" value="ALANINE_RACEMASE"/>
    <property type="match status" value="1"/>
</dbReference>
<keyword id="KW-0002">3D-structure</keyword>
<keyword id="KW-0413">Isomerase</keyword>
<keyword id="KW-0663">Pyridoxal phosphate</keyword>
<keyword id="KW-1185">Reference proteome</keyword>
<reference key="1">
    <citation type="journal article" date="2006" name="Proc. Natl. Acad. Sci. U.S.A.">
        <title>Comparative genomics of the lactic acid bacteria.</title>
        <authorList>
            <person name="Makarova K.S."/>
            <person name="Slesarev A."/>
            <person name="Wolf Y.I."/>
            <person name="Sorokin A."/>
            <person name="Mirkin B."/>
            <person name="Koonin E.V."/>
            <person name="Pavlov A."/>
            <person name="Pavlova N."/>
            <person name="Karamychev V."/>
            <person name="Polouchine N."/>
            <person name="Shakhova V."/>
            <person name="Grigoriev I."/>
            <person name="Lou Y."/>
            <person name="Rohksar D."/>
            <person name="Lucas S."/>
            <person name="Huang K."/>
            <person name="Goodstein D.M."/>
            <person name="Hawkins T."/>
            <person name="Plengvidhya V."/>
            <person name="Welker D."/>
            <person name="Hughes J."/>
            <person name="Goh Y."/>
            <person name="Benson A."/>
            <person name="Baldwin K."/>
            <person name="Lee J.-H."/>
            <person name="Diaz-Muniz I."/>
            <person name="Dosti B."/>
            <person name="Smeianov V."/>
            <person name="Wechter W."/>
            <person name="Barabote R."/>
            <person name="Lorca G."/>
            <person name="Altermann E."/>
            <person name="Barrangou R."/>
            <person name="Ganesan B."/>
            <person name="Xie Y."/>
            <person name="Rawsthorne H."/>
            <person name="Tamir D."/>
            <person name="Parker C."/>
            <person name="Breidt F."/>
            <person name="Broadbent J.R."/>
            <person name="Hutkins R."/>
            <person name="O'Sullivan D."/>
            <person name="Steele J."/>
            <person name="Unlu G."/>
            <person name="Saier M.H. Jr."/>
            <person name="Klaenhammer T."/>
            <person name="Richardson P."/>
            <person name="Kozyavkin S."/>
            <person name="Weimer B.C."/>
            <person name="Mills D.A."/>
        </authorList>
    </citation>
    <scope>NUCLEOTIDE SEQUENCE [LARGE SCALE GENOMIC DNA]</scope>
    <source>
        <strain>ATCC BAA-331 / PSU-1</strain>
    </source>
</reference>
<reference key="2">
    <citation type="journal article" date="2012" name="J. Biochem.">
        <title>Lysine racemase from a lactic acid bacterium, Oenococcus oeni: structural basis of substrate specificity.</title>
        <authorList>
            <person name="Kato S."/>
            <person name="Hemmi H."/>
            <person name="Yoshimura T."/>
        </authorList>
    </citation>
    <scope>FUNCTION</scope>
    <scope>CATALYTIC ACTIVITY</scope>
    <scope>COFACTOR</scope>
    <scope>BIOPHYSICOCHEMICAL PROPERTIES</scope>
    <scope>MUTAGENESIS OF LYS-39; THR-224; TYR-266 AND TRP-355</scope>
</reference>
<reference key="3">
    <citation type="journal article" date="2013" name="Acta Crystallogr. F">
        <title>Structure of alanine racemase from Oenococcus oeni with bound pyridoxal 5'-phosphate.</title>
        <authorList>
            <person name="Palani K."/>
            <person name="Burley S.K."/>
            <person name="Swaminathan S."/>
        </authorList>
    </citation>
    <scope>X-RAY CRYSTALLOGRAPHY (1.70 ANGSTROMS) IN COMPLEX WITH PYRIDOXAL PHOSPHATE</scope>
    <scope>SUBUNIT</scope>
    <scope>COFACTOR</scope>
    <scope>PYRIDOXAL PHOSPHATE AT LYS-39</scope>
</reference>
<gene>
    <name type="ordered locus">OEOE_0162</name>
</gene>
<feature type="chain" id="PRO_0000422274" description="Lysine racemase">
    <location>
        <begin position="1"/>
        <end position="371"/>
    </location>
</feature>
<feature type="active site" description="Proton acceptor" evidence="1">
    <location>
        <position position="39"/>
    </location>
</feature>
<feature type="active site" description="Proton acceptor" evidence="1">
    <location>
        <position position="266"/>
    </location>
</feature>
<feature type="binding site" evidence="1">
    <location>
        <position position="135"/>
    </location>
    <ligand>
        <name>substrate</name>
    </ligand>
</feature>
<feature type="binding site" evidence="1">
    <location>
        <position position="313"/>
    </location>
    <ligand>
        <name>substrate</name>
    </ligand>
</feature>
<feature type="modified residue" description="N6-(pyridoxal phosphate)lysine">
    <location>
        <position position="39"/>
    </location>
</feature>
<feature type="mutagenesis site" description="Lack of activity. Does not bind pyridoxal phosphate." evidence="2">
    <original>K</original>
    <variation>A</variation>
    <location>
        <position position="39"/>
    </location>
</feature>
<feature type="mutagenesis site" description="Decreases activity. Shows weak activity towards alanine." evidence="2">
    <original>T</original>
    <variation>I</variation>
    <location>
        <position position="224"/>
    </location>
</feature>
<feature type="mutagenesis site" description="Lack of activity." evidence="2">
    <original>Y</original>
    <variation>A</variation>
    <location>
        <position position="266"/>
    </location>
</feature>
<feature type="mutagenesis site" description="Decreases activity. Shows weak activity towards alanine." evidence="2">
    <original>W</original>
    <variation>Y</variation>
    <location>
        <position position="355"/>
    </location>
</feature>
<feature type="strand" evidence="5">
    <location>
        <begin position="10"/>
        <end position="14"/>
    </location>
</feature>
<feature type="helix" evidence="5">
    <location>
        <begin position="15"/>
        <end position="29"/>
    </location>
</feature>
<feature type="strand" evidence="5">
    <location>
        <begin position="32"/>
        <end position="37"/>
    </location>
</feature>
<feature type="helix" evidence="5">
    <location>
        <begin position="39"/>
        <end position="43"/>
    </location>
</feature>
<feature type="helix" evidence="5">
    <location>
        <begin position="47"/>
        <end position="54"/>
    </location>
</feature>
<feature type="helix" evidence="5">
    <location>
        <begin position="55"/>
        <end position="57"/>
    </location>
</feature>
<feature type="strand" evidence="5">
    <location>
        <begin position="61"/>
        <end position="66"/>
    </location>
</feature>
<feature type="helix" evidence="5">
    <location>
        <begin position="67"/>
        <end position="75"/>
    </location>
</feature>
<feature type="strand" evidence="5">
    <location>
        <begin position="82"/>
        <end position="84"/>
    </location>
</feature>
<feature type="helix" evidence="5">
    <location>
        <begin position="90"/>
        <end position="92"/>
    </location>
</feature>
<feature type="helix" evidence="5">
    <location>
        <begin position="93"/>
        <end position="98"/>
    </location>
</feature>
<feature type="strand" evidence="5">
    <location>
        <begin position="102"/>
        <end position="105"/>
    </location>
</feature>
<feature type="helix" evidence="5">
    <location>
        <begin position="108"/>
        <end position="117"/>
    </location>
</feature>
<feature type="strand" evidence="5">
    <location>
        <begin position="123"/>
        <end position="129"/>
    </location>
</feature>
<feature type="strand" evidence="5">
    <location>
        <begin position="131"/>
        <end position="133"/>
    </location>
</feature>
<feature type="strand" evidence="5">
    <location>
        <begin position="135"/>
        <end position="138"/>
    </location>
</feature>
<feature type="helix" evidence="5">
    <location>
        <begin position="141"/>
        <end position="153"/>
    </location>
</feature>
<feature type="turn" evidence="5">
    <location>
        <begin position="155"/>
        <end position="157"/>
    </location>
</feature>
<feature type="strand" evidence="5">
    <location>
        <begin position="158"/>
        <end position="164"/>
    </location>
</feature>
<feature type="helix" evidence="5">
    <location>
        <begin position="179"/>
        <end position="189"/>
    </location>
</feature>
<feature type="strand" evidence="5">
    <location>
        <begin position="196"/>
        <end position="199"/>
    </location>
</feature>
<feature type="helix" evidence="5">
    <location>
        <begin position="203"/>
        <end position="208"/>
    </location>
</feature>
<feature type="helix" evidence="5">
    <location>
        <begin position="210"/>
        <end position="212"/>
    </location>
</feature>
<feature type="strand" evidence="5">
    <location>
        <begin position="218"/>
        <end position="223"/>
    </location>
</feature>
<feature type="turn" evidence="5">
    <location>
        <begin position="224"/>
        <end position="228"/>
    </location>
</feature>
<feature type="turn" evidence="5">
    <location>
        <begin position="231"/>
        <end position="234"/>
    </location>
</feature>
<feature type="strand" evidence="5">
    <location>
        <begin position="235"/>
        <end position="237"/>
    </location>
</feature>
<feature type="helix" evidence="5">
    <location>
        <begin position="239"/>
        <end position="241"/>
    </location>
</feature>
<feature type="strand" evidence="5">
    <location>
        <begin position="246"/>
        <end position="251"/>
    </location>
</feature>
<feature type="strand" evidence="5">
    <location>
        <begin position="253"/>
        <end position="258"/>
    </location>
</feature>
<feature type="strand" evidence="5">
    <location>
        <begin position="263"/>
        <end position="265"/>
    </location>
</feature>
<feature type="helix" evidence="5">
    <location>
        <begin position="266"/>
        <end position="268"/>
    </location>
</feature>
<feature type="strand" evidence="5">
    <location>
        <begin position="273"/>
        <end position="282"/>
    </location>
</feature>
<feature type="helix" evidence="5">
    <location>
        <begin position="285"/>
        <end position="287"/>
    </location>
</feature>
<feature type="helix" evidence="5">
    <location>
        <begin position="291"/>
        <end position="293"/>
    </location>
</feature>
<feature type="strand" evidence="5">
    <location>
        <begin position="297"/>
        <end position="300"/>
    </location>
</feature>
<feature type="strand" evidence="5">
    <location>
        <begin position="303"/>
        <end position="309"/>
    </location>
</feature>
<feature type="strand" evidence="5">
    <location>
        <begin position="316"/>
        <end position="322"/>
    </location>
</feature>
<feature type="strand" evidence="5">
    <location>
        <begin position="329"/>
        <end position="336"/>
    </location>
</feature>
<feature type="strand" evidence="5">
    <location>
        <begin position="339"/>
        <end position="341"/>
    </location>
</feature>
<feature type="helix" evidence="5">
    <location>
        <begin position="343"/>
        <end position="350"/>
    </location>
</feature>
<feature type="helix" evidence="5">
    <location>
        <begin position="354"/>
        <end position="359"/>
    </location>
</feature>
<feature type="strand" evidence="5">
    <location>
        <begin position="365"/>
        <end position="370"/>
    </location>
</feature>
<proteinExistence type="evidence at protein level"/>